<comment type="similarity">
    <text evidence="1">Belongs to the UPF0342 family.</text>
</comment>
<evidence type="ECO:0000255" key="1">
    <source>
        <dbReference type="HAMAP-Rule" id="MF_01526"/>
    </source>
</evidence>
<sequence length="113" mass="12928">MSQEIYDYANQLERAVRALPEYQKVLEVKEAIQADVSASELFDEFVAMQEKIQGMMQSGQMPTAEEQTSIQELSQKIEANDQLKAYFEAQQALSVYMSDIERIVFAPLKDLVK</sequence>
<gene>
    <name type="ordered locus">SPy_0811</name>
    <name type="ordered locus">M5005_Spy0626</name>
</gene>
<reference key="1">
    <citation type="journal article" date="2001" name="Proc. Natl. Acad. Sci. U.S.A.">
        <title>Complete genome sequence of an M1 strain of Streptococcus pyogenes.</title>
        <authorList>
            <person name="Ferretti J.J."/>
            <person name="McShan W.M."/>
            <person name="Ajdic D.J."/>
            <person name="Savic D.J."/>
            <person name="Savic G."/>
            <person name="Lyon K."/>
            <person name="Primeaux C."/>
            <person name="Sezate S."/>
            <person name="Suvorov A.N."/>
            <person name="Kenton S."/>
            <person name="Lai H.S."/>
            <person name="Lin S.P."/>
            <person name="Qian Y."/>
            <person name="Jia H.G."/>
            <person name="Najar F.Z."/>
            <person name="Ren Q."/>
            <person name="Zhu H."/>
            <person name="Song L."/>
            <person name="White J."/>
            <person name="Yuan X."/>
            <person name="Clifton S.W."/>
            <person name="Roe B.A."/>
            <person name="McLaughlin R.E."/>
        </authorList>
    </citation>
    <scope>NUCLEOTIDE SEQUENCE [LARGE SCALE GENOMIC DNA]</scope>
    <source>
        <strain>ATCC 700294 / SF370 / Serotype M1</strain>
    </source>
</reference>
<reference key="2">
    <citation type="journal article" date="2005" name="J. Infect. Dis.">
        <title>Evolutionary origin and emergence of a highly successful clone of serotype M1 group A Streptococcus involved multiple horizontal gene transfer events.</title>
        <authorList>
            <person name="Sumby P."/>
            <person name="Porcella S.F."/>
            <person name="Madrigal A.G."/>
            <person name="Barbian K.D."/>
            <person name="Virtaneva K."/>
            <person name="Ricklefs S.M."/>
            <person name="Sturdevant D.E."/>
            <person name="Graham M.R."/>
            <person name="Vuopio-Varkila J."/>
            <person name="Hoe N.P."/>
            <person name="Musser J.M."/>
        </authorList>
    </citation>
    <scope>NUCLEOTIDE SEQUENCE [LARGE SCALE GENOMIC DNA]</scope>
    <source>
        <strain>ATCC BAA-947 / MGAS5005 / Serotype M1</strain>
    </source>
</reference>
<feature type="chain" id="PRO_0000109996" description="UPF0342 protein SPy_0811/M5005_Spy0626">
    <location>
        <begin position="1"/>
        <end position="113"/>
    </location>
</feature>
<name>Y811_STRP1</name>
<protein>
    <recommendedName>
        <fullName evidence="1">UPF0342 protein SPy_0811/M5005_Spy0626</fullName>
    </recommendedName>
</protein>
<organism>
    <name type="scientific">Streptococcus pyogenes serotype M1</name>
    <dbReference type="NCBI Taxonomy" id="301447"/>
    <lineage>
        <taxon>Bacteria</taxon>
        <taxon>Bacillati</taxon>
        <taxon>Bacillota</taxon>
        <taxon>Bacilli</taxon>
        <taxon>Lactobacillales</taxon>
        <taxon>Streptococcaceae</taxon>
        <taxon>Streptococcus</taxon>
    </lineage>
</organism>
<keyword id="KW-1185">Reference proteome</keyword>
<proteinExistence type="inferred from homology"/>
<dbReference type="EMBL" id="AE004092">
    <property type="protein sequence ID" value="AAK33748.1"/>
    <property type="molecule type" value="Genomic_DNA"/>
</dbReference>
<dbReference type="EMBL" id="CP000017">
    <property type="protein sequence ID" value="AAZ51244.1"/>
    <property type="molecule type" value="Genomic_DNA"/>
</dbReference>
<dbReference type="RefSeq" id="NP_269027.1">
    <property type="nucleotide sequence ID" value="NC_002737.2"/>
</dbReference>
<dbReference type="SMR" id="Q9A0E3"/>
<dbReference type="PaxDb" id="1314-HKU360_00637"/>
<dbReference type="KEGG" id="spy:SPy_0811"/>
<dbReference type="KEGG" id="spz:M5005_Spy0626"/>
<dbReference type="PATRIC" id="fig|160490.10.peg.694"/>
<dbReference type="HOGENOM" id="CLU_140243_2_0_9"/>
<dbReference type="OMA" id="YDNANEM"/>
<dbReference type="Proteomes" id="UP000000750">
    <property type="component" value="Chromosome"/>
</dbReference>
<dbReference type="Gene3D" id="1.20.1500.10">
    <property type="entry name" value="YheA/YmcA-like"/>
    <property type="match status" value="1"/>
</dbReference>
<dbReference type="HAMAP" id="MF_01526">
    <property type="entry name" value="UPF0342"/>
    <property type="match status" value="1"/>
</dbReference>
<dbReference type="InterPro" id="IPR010368">
    <property type="entry name" value="Com_YlbF"/>
</dbReference>
<dbReference type="InterPro" id="IPR023378">
    <property type="entry name" value="YheA/YmcA-like_dom_sf"/>
</dbReference>
<dbReference type="NCBIfam" id="NF010209">
    <property type="entry name" value="PRK13676.1-1"/>
    <property type="match status" value="1"/>
</dbReference>
<dbReference type="Pfam" id="PF06133">
    <property type="entry name" value="Com_YlbF"/>
    <property type="match status" value="1"/>
</dbReference>
<dbReference type="SUPFAM" id="SSF158622">
    <property type="entry name" value="YheA/YmcA-like"/>
    <property type="match status" value="1"/>
</dbReference>
<accession>Q9A0E3</accession>
<accession>Q48ZH4</accession>